<name>LAP1_ARTGP</name>
<comment type="function">
    <text evidence="1">Extracellular aminopeptidase that allows assimilation of proteinaceous substrates.</text>
</comment>
<comment type="cofactor">
    <cofactor evidence="1">
        <name>Zn(2+)</name>
        <dbReference type="ChEBI" id="CHEBI:29105"/>
    </cofactor>
    <text evidence="1">Binds 2 Zn(2+) ions per subunit.</text>
</comment>
<comment type="subunit">
    <text evidence="1">Monomer.</text>
</comment>
<comment type="subcellular location">
    <subcellularLocation>
        <location evidence="1">Secreted</location>
    </subcellularLocation>
</comment>
<comment type="similarity">
    <text evidence="3">Belongs to the peptidase M28 family. M28E subfamily.</text>
</comment>
<accession>E4V655</accession>
<keyword id="KW-0031">Aminopeptidase</keyword>
<keyword id="KW-1015">Disulfide bond</keyword>
<keyword id="KW-0325">Glycoprotein</keyword>
<keyword id="KW-0378">Hydrolase</keyword>
<keyword id="KW-0479">Metal-binding</keyword>
<keyword id="KW-0645">Protease</keyword>
<keyword id="KW-1185">Reference proteome</keyword>
<keyword id="KW-0964">Secreted</keyword>
<keyword id="KW-0732">Signal</keyword>
<keyword id="KW-0862">Zinc</keyword>
<keyword id="KW-0865">Zymogen</keyword>
<gene>
    <name type="primary">LAP1</name>
    <name type="ORF">MGYG_08250</name>
</gene>
<proteinExistence type="inferred from homology"/>
<organism>
    <name type="scientific">Arthroderma gypseum (strain ATCC MYA-4604 / CBS 118893)</name>
    <name type="common">Microsporum gypseum</name>
    <dbReference type="NCBI Taxonomy" id="535722"/>
    <lineage>
        <taxon>Eukaryota</taxon>
        <taxon>Fungi</taxon>
        <taxon>Dikarya</taxon>
        <taxon>Ascomycota</taxon>
        <taxon>Pezizomycotina</taxon>
        <taxon>Eurotiomycetes</taxon>
        <taxon>Eurotiomycetidae</taxon>
        <taxon>Onygenales</taxon>
        <taxon>Arthrodermataceae</taxon>
        <taxon>Nannizzia</taxon>
    </lineage>
</organism>
<sequence>MKLLSVLALSATASSVLGASIPVDTRAEKFLIELAPGETRWVTEEEKWALKESGQDFFDITDEEVGFTAAVAQPAVAYPTSIRHADAVNAMIATLSKENMQRDLTKLSSFHNRYYKSDYGKQSATWLQQQVQAAITASGANRYGAKVASFQHNFAQHSIIATIPGRSAEIVVVGAHQDSINGRSPMTGRAPGADDNGSGSVTILEALRGVLQDQTIVQGKAANTIEFHWYAGEEAGLLGSQAIFANYKQTGKKVKGMLNQDMTGYVKGMLDKGLKESFGIITDNVNANLTKFIRMVITKYCQIPTIDTRCGYACSDHASANRNGFPSAMVAESPIDLLDPHLHTDSDNISYLSFDHMIQHAKLVVGFVTELAK</sequence>
<protein>
    <recommendedName>
        <fullName>Leucine aminopeptidase 1</fullName>
        <ecNumber>3.4.11.-</ecNumber>
    </recommendedName>
    <alternativeName>
        <fullName>Leucyl aminopeptidase 1</fullName>
        <shortName>LAP1</shortName>
    </alternativeName>
</protein>
<evidence type="ECO:0000250" key="1"/>
<evidence type="ECO:0000255" key="2"/>
<evidence type="ECO:0000305" key="3"/>
<feature type="signal peptide" evidence="2">
    <location>
        <begin position="1"/>
        <end position="18"/>
    </location>
</feature>
<feature type="propeptide" id="PRO_0000412386" evidence="1">
    <location>
        <begin position="19"/>
        <end position="75"/>
    </location>
</feature>
<feature type="chain" id="PRO_0000412387" description="Leucine aminopeptidase 1">
    <location>
        <begin position="76"/>
        <end position="373"/>
    </location>
</feature>
<feature type="binding site" evidence="1">
    <location>
        <position position="176"/>
    </location>
    <ligand>
        <name>Zn(2+)</name>
        <dbReference type="ChEBI" id="CHEBI:29105"/>
        <label>1</label>
    </ligand>
</feature>
<feature type="binding site" evidence="1">
    <location>
        <position position="195"/>
    </location>
    <ligand>
        <name>Zn(2+)</name>
        <dbReference type="ChEBI" id="CHEBI:29105"/>
        <label>1</label>
    </ligand>
</feature>
<feature type="binding site" evidence="1">
    <location>
        <position position="195"/>
    </location>
    <ligand>
        <name>Zn(2+)</name>
        <dbReference type="ChEBI" id="CHEBI:29105"/>
        <label>2</label>
        <note>catalytic</note>
    </ligand>
</feature>
<feature type="binding site" evidence="1">
    <location>
        <position position="234"/>
    </location>
    <ligand>
        <name>Zn(2+)</name>
        <dbReference type="ChEBI" id="CHEBI:29105"/>
        <label>2</label>
        <note>catalytic</note>
    </ligand>
</feature>
<feature type="binding site" evidence="1">
    <location>
        <position position="261"/>
    </location>
    <ligand>
        <name>Zn(2+)</name>
        <dbReference type="ChEBI" id="CHEBI:29105"/>
        <label>1</label>
    </ligand>
</feature>
<feature type="binding site" evidence="1">
    <location>
        <position position="343"/>
    </location>
    <ligand>
        <name>Zn(2+)</name>
        <dbReference type="ChEBI" id="CHEBI:29105"/>
        <label>2</label>
        <note>catalytic</note>
    </ligand>
</feature>
<feature type="glycosylation site" description="N-linked (GlcNAc...) asparagine" evidence="2">
    <location>
        <position position="196"/>
    </location>
</feature>
<feature type="glycosylation site" description="N-linked (GlcNAc...) asparagine" evidence="2">
    <location>
        <position position="288"/>
    </location>
</feature>
<feature type="glycosylation site" description="N-linked (GlcNAc...) asparagine" evidence="2">
    <location>
        <position position="348"/>
    </location>
</feature>
<feature type="disulfide bond" evidence="1">
    <location>
        <begin position="310"/>
        <end position="314"/>
    </location>
</feature>
<dbReference type="EC" id="3.4.11.-"/>
<dbReference type="EMBL" id="DS989830">
    <property type="protein sequence ID" value="EFR05238.1"/>
    <property type="molecule type" value="Genomic_DNA"/>
</dbReference>
<dbReference type="RefSeq" id="XP_003169345.1">
    <property type="nucleotide sequence ID" value="XM_003169297.1"/>
</dbReference>
<dbReference type="SMR" id="E4V655"/>
<dbReference type="FunCoup" id="E4V655">
    <property type="interactions" value="25"/>
</dbReference>
<dbReference type="STRING" id="535722.E4V655"/>
<dbReference type="MEROPS" id="M28.022"/>
<dbReference type="GlyCosmos" id="E4V655">
    <property type="glycosylation" value="3 sites, No reported glycans"/>
</dbReference>
<dbReference type="GeneID" id="10024574"/>
<dbReference type="VEuPathDB" id="FungiDB:MGYG_08250"/>
<dbReference type="eggNOG" id="KOG2195">
    <property type="taxonomic scope" value="Eukaryota"/>
</dbReference>
<dbReference type="HOGENOM" id="CLU_025866_0_1_1"/>
<dbReference type="InParanoid" id="E4V655"/>
<dbReference type="OMA" id="QSATWLQ"/>
<dbReference type="OrthoDB" id="2214at2759"/>
<dbReference type="Proteomes" id="UP000002669">
    <property type="component" value="Unassembled WGS sequence"/>
</dbReference>
<dbReference type="GO" id="GO:0005576">
    <property type="term" value="C:extracellular region"/>
    <property type="evidence" value="ECO:0007669"/>
    <property type="project" value="UniProtKB-SubCell"/>
</dbReference>
<dbReference type="GO" id="GO:0004177">
    <property type="term" value="F:aminopeptidase activity"/>
    <property type="evidence" value="ECO:0007669"/>
    <property type="project" value="UniProtKB-KW"/>
</dbReference>
<dbReference type="GO" id="GO:0046872">
    <property type="term" value="F:metal ion binding"/>
    <property type="evidence" value="ECO:0007669"/>
    <property type="project" value="UniProtKB-KW"/>
</dbReference>
<dbReference type="GO" id="GO:0008235">
    <property type="term" value="F:metalloexopeptidase activity"/>
    <property type="evidence" value="ECO:0007669"/>
    <property type="project" value="InterPro"/>
</dbReference>
<dbReference type="GO" id="GO:0006508">
    <property type="term" value="P:proteolysis"/>
    <property type="evidence" value="ECO:0007669"/>
    <property type="project" value="UniProtKB-KW"/>
</dbReference>
<dbReference type="CDD" id="cd03879">
    <property type="entry name" value="M28_AAP"/>
    <property type="match status" value="1"/>
</dbReference>
<dbReference type="FunFam" id="3.40.630.10:FF:000042">
    <property type="entry name" value="Peptide hydrolase"/>
    <property type="match status" value="1"/>
</dbReference>
<dbReference type="Gene3D" id="3.40.630.10">
    <property type="entry name" value="Zn peptidases"/>
    <property type="match status" value="1"/>
</dbReference>
<dbReference type="InterPro" id="IPR045175">
    <property type="entry name" value="M28_fam"/>
</dbReference>
<dbReference type="InterPro" id="IPR007484">
    <property type="entry name" value="Peptidase_M28"/>
</dbReference>
<dbReference type="PANTHER" id="PTHR12147:SF56">
    <property type="entry name" value="AMINOPEPTIDASE YDR415C-RELATED"/>
    <property type="match status" value="1"/>
</dbReference>
<dbReference type="PANTHER" id="PTHR12147">
    <property type="entry name" value="METALLOPEPTIDASE M28 FAMILY MEMBER"/>
    <property type="match status" value="1"/>
</dbReference>
<dbReference type="Pfam" id="PF04389">
    <property type="entry name" value="Peptidase_M28"/>
    <property type="match status" value="1"/>
</dbReference>
<dbReference type="SUPFAM" id="SSF53187">
    <property type="entry name" value="Zn-dependent exopeptidases"/>
    <property type="match status" value="1"/>
</dbReference>
<reference key="1">
    <citation type="journal article" date="2012" name="MBio">
        <title>Comparative genome analysis of Trichophyton rubrum and related dermatophytes reveals candidate genes involved in infection.</title>
        <authorList>
            <person name="Martinez D.A."/>
            <person name="Oliver B.G."/>
            <person name="Graeser Y."/>
            <person name="Goldberg J.M."/>
            <person name="Li W."/>
            <person name="Martinez-Rossi N.M."/>
            <person name="Monod M."/>
            <person name="Shelest E."/>
            <person name="Barton R.C."/>
            <person name="Birch E."/>
            <person name="Brakhage A.A."/>
            <person name="Chen Z."/>
            <person name="Gurr S.J."/>
            <person name="Heiman D."/>
            <person name="Heitman J."/>
            <person name="Kosti I."/>
            <person name="Rossi A."/>
            <person name="Saif S."/>
            <person name="Samalova M."/>
            <person name="Saunders C.W."/>
            <person name="Shea T."/>
            <person name="Summerbell R.C."/>
            <person name="Xu J."/>
            <person name="Young S."/>
            <person name="Zeng Q."/>
            <person name="Birren B.W."/>
            <person name="Cuomo C.A."/>
            <person name="White T.C."/>
        </authorList>
    </citation>
    <scope>NUCLEOTIDE SEQUENCE [LARGE SCALE GENOMIC DNA]</scope>
    <source>
        <strain>ATCC MYA-4604 / CBS 118893</strain>
    </source>
</reference>